<sequence length="223" mass="24736">MRPLGKGLLPAEELIRSNLGVGRSLRDCLSQSGKLAEELGSKRLKPAKFGTEGKERVEQRTERQRTGSSKEPRMQIICRRRWREPPPRLLWGCLMPRAQPLLHVTAYENTGHWERLASVVSSKTQQPTVISHSSISITFSHYPPATLDSFLVLEPIKLFPVSSLRSPLCLNCGSCRESIRISGELIGNAHSPAPPRTPELETLGWDKQAVLSGAQVILVCAEV</sequence>
<organism>
    <name type="scientific">Homo sapiens</name>
    <name type="common">Human</name>
    <dbReference type="NCBI Taxonomy" id="9606"/>
    <lineage>
        <taxon>Eukaryota</taxon>
        <taxon>Metazoa</taxon>
        <taxon>Chordata</taxon>
        <taxon>Craniata</taxon>
        <taxon>Vertebrata</taxon>
        <taxon>Euteleostomi</taxon>
        <taxon>Mammalia</taxon>
        <taxon>Eutheria</taxon>
        <taxon>Euarchontoglires</taxon>
        <taxon>Primates</taxon>
        <taxon>Haplorrhini</taxon>
        <taxon>Catarrhini</taxon>
        <taxon>Hominidae</taxon>
        <taxon>Homo</taxon>
    </lineage>
</organism>
<proteinExistence type="evidence at transcript level"/>
<name>CH086_HUMAN</name>
<evidence type="ECO:0000256" key="1">
    <source>
        <dbReference type="SAM" id="MobiDB-lite"/>
    </source>
</evidence>
<evidence type="ECO:0000303" key="2">
    <source>
    </source>
</evidence>
<evidence type="ECO:0000305" key="3"/>
<evidence type="ECO:0000312" key="4">
    <source>
        <dbReference type="HGNC" id="HGNC:33774"/>
    </source>
</evidence>
<gene>
    <name evidence="4" type="primary">LINC03042</name>
    <name type="synonym">C8orf86</name>
</gene>
<comment type="alternative products">
    <event type="alternative splicing"/>
    <isoform>
        <id>Q6ZUL3-1</id>
        <name>1</name>
        <sequence type="displayed"/>
    </isoform>
    <isoform>
        <id>Q6ZUL3-2</id>
        <name>2</name>
        <sequence type="described" ref="VSP_035171 VSP_035172"/>
    </isoform>
</comment>
<feature type="chain" id="PRO_0000348466" description="Uncharacterized protein LINC03042">
    <location>
        <begin position="1"/>
        <end position="223"/>
    </location>
</feature>
<feature type="region of interest" description="Disordered" evidence="1">
    <location>
        <begin position="40"/>
        <end position="70"/>
    </location>
</feature>
<feature type="compositionally biased region" description="Basic and acidic residues" evidence="1">
    <location>
        <begin position="51"/>
        <end position="70"/>
    </location>
</feature>
<feature type="splice variant" id="VSP_035171" description="In isoform 2." evidence="2">
    <original>AYENTGHWERLASVVSSKTQQPTVISHSSISITFS</original>
    <variation>PPQSSLLELWLLQRKHQNLRGTDWKCTFSSPAQNS</variation>
    <location>
        <begin position="106"/>
        <end position="140"/>
    </location>
</feature>
<feature type="splice variant" id="VSP_035172" description="In isoform 2." evidence="2">
    <location>
        <begin position="141"/>
        <end position="223"/>
    </location>
</feature>
<feature type="sequence variant" id="VAR_046186" description="In dbSNP:rs1378332.">
    <original>R</original>
    <variation>H</variation>
    <location>
        <position position="81"/>
    </location>
</feature>
<protein>
    <recommendedName>
        <fullName evidence="3">Uncharacterized protein LINC03042</fullName>
    </recommendedName>
    <alternativeName>
        <fullName evidence="4">Long intergenic non-protein coding RNA 3042</fullName>
    </alternativeName>
</protein>
<keyword id="KW-0025">Alternative splicing</keyword>
<keyword id="KW-1185">Reference proteome</keyword>
<accession>Q6ZUL3</accession>
<accession>A4QPB7</accession>
<reference key="1">
    <citation type="journal article" date="2004" name="Nat. Genet.">
        <title>Complete sequencing and characterization of 21,243 full-length human cDNAs.</title>
        <authorList>
            <person name="Ota T."/>
            <person name="Suzuki Y."/>
            <person name="Nishikawa T."/>
            <person name="Otsuki T."/>
            <person name="Sugiyama T."/>
            <person name="Irie R."/>
            <person name="Wakamatsu A."/>
            <person name="Hayashi K."/>
            <person name="Sato H."/>
            <person name="Nagai K."/>
            <person name="Kimura K."/>
            <person name="Makita H."/>
            <person name="Sekine M."/>
            <person name="Obayashi M."/>
            <person name="Nishi T."/>
            <person name="Shibahara T."/>
            <person name="Tanaka T."/>
            <person name="Ishii S."/>
            <person name="Yamamoto J."/>
            <person name="Saito K."/>
            <person name="Kawai Y."/>
            <person name="Isono Y."/>
            <person name="Nakamura Y."/>
            <person name="Nagahari K."/>
            <person name="Murakami K."/>
            <person name="Yasuda T."/>
            <person name="Iwayanagi T."/>
            <person name="Wagatsuma M."/>
            <person name="Shiratori A."/>
            <person name="Sudo H."/>
            <person name="Hosoiri T."/>
            <person name="Kaku Y."/>
            <person name="Kodaira H."/>
            <person name="Kondo H."/>
            <person name="Sugawara M."/>
            <person name="Takahashi M."/>
            <person name="Kanda K."/>
            <person name="Yokoi T."/>
            <person name="Furuya T."/>
            <person name="Kikkawa E."/>
            <person name="Omura Y."/>
            <person name="Abe K."/>
            <person name="Kamihara K."/>
            <person name="Katsuta N."/>
            <person name="Sato K."/>
            <person name="Tanikawa M."/>
            <person name="Yamazaki M."/>
            <person name="Ninomiya K."/>
            <person name="Ishibashi T."/>
            <person name="Yamashita H."/>
            <person name="Murakawa K."/>
            <person name="Fujimori K."/>
            <person name="Tanai H."/>
            <person name="Kimata M."/>
            <person name="Watanabe M."/>
            <person name="Hiraoka S."/>
            <person name="Chiba Y."/>
            <person name="Ishida S."/>
            <person name="Ono Y."/>
            <person name="Takiguchi S."/>
            <person name="Watanabe S."/>
            <person name="Yosida M."/>
            <person name="Hotuta T."/>
            <person name="Kusano J."/>
            <person name="Kanehori K."/>
            <person name="Takahashi-Fujii A."/>
            <person name="Hara H."/>
            <person name="Tanase T.-O."/>
            <person name="Nomura Y."/>
            <person name="Togiya S."/>
            <person name="Komai F."/>
            <person name="Hara R."/>
            <person name="Takeuchi K."/>
            <person name="Arita M."/>
            <person name="Imose N."/>
            <person name="Musashino K."/>
            <person name="Yuuki H."/>
            <person name="Oshima A."/>
            <person name="Sasaki N."/>
            <person name="Aotsuka S."/>
            <person name="Yoshikawa Y."/>
            <person name="Matsunawa H."/>
            <person name="Ichihara T."/>
            <person name="Shiohata N."/>
            <person name="Sano S."/>
            <person name="Moriya S."/>
            <person name="Momiyama H."/>
            <person name="Satoh N."/>
            <person name="Takami S."/>
            <person name="Terashima Y."/>
            <person name="Suzuki O."/>
            <person name="Nakagawa S."/>
            <person name="Senoh A."/>
            <person name="Mizoguchi H."/>
            <person name="Goto Y."/>
            <person name="Shimizu F."/>
            <person name="Wakebe H."/>
            <person name="Hishigaki H."/>
            <person name="Watanabe T."/>
            <person name="Sugiyama A."/>
            <person name="Takemoto M."/>
            <person name="Kawakami B."/>
            <person name="Yamazaki M."/>
            <person name="Watanabe K."/>
            <person name="Kumagai A."/>
            <person name="Itakura S."/>
            <person name="Fukuzumi Y."/>
            <person name="Fujimori Y."/>
            <person name="Komiyama M."/>
            <person name="Tashiro H."/>
            <person name="Tanigami A."/>
            <person name="Fujiwara T."/>
            <person name="Ono T."/>
            <person name="Yamada K."/>
            <person name="Fujii Y."/>
            <person name="Ozaki K."/>
            <person name="Hirao M."/>
            <person name="Ohmori Y."/>
            <person name="Kawabata A."/>
            <person name="Hikiji T."/>
            <person name="Kobatake N."/>
            <person name="Inagaki H."/>
            <person name="Ikema Y."/>
            <person name="Okamoto S."/>
            <person name="Okitani R."/>
            <person name="Kawakami T."/>
            <person name="Noguchi S."/>
            <person name="Itoh T."/>
            <person name="Shigeta K."/>
            <person name="Senba T."/>
            <person name="Matsumura K."/>
            <person name="Nakajima Y."/>
            <person name="Mizuno T."/>
            <person name="Morinaga M."/>
            <person name="Sasaki M."/>
            <person name="Togashi T."/>
            <person name="Oyama M."/>
            <person name="Hata H."/>
            <person name="Watanabe M."/>
            <person name="Komatsu T."/>
            <person name="Mizushima-Sugano J."/>
            <person name="Satoh T."/>
            <person name="Shirai Y."/>
            <person name="Takahashi Y."/>
            <person name="Nakagawa K."/>
            <person name="Okumura K."/>
            <person name="Nagase T."/>
            <person name="Nomura N."/>
            <person name="Kikuchi H."/>
            <person name="Masuho Y."/>
            <person name="Yamashita R."/>
            <person name="Nakai K."/>
            <person name="Yada T."/>
            <person name="Nakamura Y."/>
            <person name="Ohara O."/>
            <person name="Isogai T."/>
            <person name="Sugano S."/>
        </authorList>
    </citation>
    <scope>NUCLEOTIDE SEQUENCE [LARGE SCALE MRNA] (ISOFORM 1)</scope>
</reference>
<reference key="2">
    <citation type="journal article" date="2004" name="Genome Res.">
        <title>The status, quality, and expansion of the NIH full-length cDNA project: the Mammalian Gene Collection (MGC).</title>
        <authorList>
            <consortium name="The MGC Project Team"/>
        </authorList>
    </citation>
    <scope>NUCLEOTIDE SEQUENCE [LARGE SCALE MRNA] (ISOFORMS 1 AND 2)</scope>
    <source>
        <tissue>Brain</tissue>
    </source>
</reference>
<dbReference type="EMBL" id="AK125570">
    <property type="protein sequence ID" value="BAC86207.1"/>
    <property type="molecule type" value="mRNA"/>
</dbReference>
<dbReference type="EMBL" id="BC137511">
    <property type="protein sequence ID" value="AAI37512.1"/>
    <property type="molecule type" value="mRNA"/>
</dbReference>
<dbReference type="EMBL" id="BC137512">
    <property type="protein sequence ID" value="AAI37513.1"/>
    <property type="molecule type" value="mRNA"/>
</dbReference>
<dbReference type="EMBL" id="BC139744">
    <property type="protein sequence ID" value="AAI39745.1"/>
    <property type="molecule type" value="mRNA"/>
</dbReference>
<dbReference type="RefSeq" id="NP_001290460.1">
    <property type="nucleotide sequence ID" value="NM_001303531.1"/>
</dbReference>
<dbReference type="RefSeq" id="NP_997295.1">
    <property type="nucleotide sequence ID" value="NM_207412.2"/>
</dbReference>
<dbReference type="BioGRID" id="133205">
    <property type="interactions" value="3"/>
</dbReference>
<dbReference type="IntAct" id="Q6ZUL3">
    <property type="interactions" value="1"/>
</dbReference>
<dbReference type="MINT" id="Q6ZUL3"/>
<dbReference type="STRING" id="9606.ENSP00000350856"/>
<dbReference type="iPTMnet" id="Q6ZUL3"/>
<dbReference type="PhosphoSitePlus" id="Q6ZUL3"/>
<dbReference type="BioMuta" id="C8orf86"/>
<dbReference type="DMDM" id="74712010"/>
<dbReference type="PaxDb" id="9606-ENSP00000350856"/>
<dbReference type="DNASU" id="389649"/>
<dbReference type="UCSC" id="uc003xlx.1">
    <molecule id="Q6ZUL3-1"/>
    <property type="organism name" value="human"/>
</dbReference>
<dbReference type="AGR" id="HGNC:33774"/>
<dbReference type="DisGeNET" id="389649"/>
<dbReference type="GeneCards" id="LINC03042"/>
<dbReference type="HGNC" id="HGNC:33774">
    <property type="gene designation" value="LINC03042"/>
</dbReference>
<dbReference type="neXtProt" id="NX_Q6ZUL3"/>
<dbReference type="PharmGKB" id="PA164717510"/>
<dbReference type="eggNOG" id="ENOG502TFS7">
    <property type="taxonomic scope" value="Eukaryota"/>
</dbReference>
<dbReference type="HOGENOM" id="CLU_1239779_0_0_1"/>
<dbReference type="InParanoid" id="Q6ZUL3"/>
<dbReference type="PAN-GO" id="Q6ZUL3">
    <property type="GO annotations" value="0 GO annotations based on evolutionary models"/>
</dbReference>
<dbReference type="PhylomeDB" id="Q6ZUL3"/>
<dbReference type="TreeFam" id="TF353970"/>
<dbReference type="PathwayCommons" id="Q6ZUL3"/>
<dbReference type="BioGRID-ORCS" id="389649">
    <property type="hits" value="14 hits in 1128 CRISPR screens"/>
</dbReference>
<dbReference type="GenomeRNAi" id="389649"/>
<dbReference type="Pharos" id="Q6ZUL3">
    <property type="development level" value="Tdark"/>
</dbReference>
<dbReference type="PRO" id="PR:Q6ZUL3"/>
<dbReference type="Proteomes" id="UP000005640">
    <property type="component" value="Chromosome 8"/>
</dbReference>
<dbReference type="RNAct" id="Q6ZUL3">
    <property type="molecule type" value="protein"/>
</dbReference>
<dbReference type="InterPro" id="IPR040864">
    <property type="entry name" value="DUF5553"/>
</dbReference>
<dbReference type="Pfam" id="PF17707">
    <property type="entry name" value="DUF5553"/>
    <property type="match status" value="1"/>
</dbReference>